<accession>C0H440</accession>
<gene>
    <name type="primary">youA</name>
    <name type="ordered locus">BSU21229</name>
</gene>
<keyword id="KW-1185">Reference proteome</keyword>
<organism>
    <name type="scientific">Bacillus subtilis (strain 168)</name>
    <dbReference type="NCBI Taxonomy" id="224308"/>
    <lineage>
        <taxon>Bacteria</taxon>
        <taxon>Bacillati</taxon>
        <taxon>Bacillota</taxon>
        <taxon>Bacilli</taxon>
        <taxon>Bacillales</taxon>
        <taxon>Bacillaceae</taxon>
        <taxon>Bacillus</taxon>
    </lineage>
</organism>
<reference key="1">
    <citation type="journal article" date="1997" name="Nature">
        <title>The complete genome sequence of the Gram-positive bacterium Bacillus subtilis.</title>
        <authorList>
            <person name="Kunst F."/>
            <person name="Ogasawara N."/>
            <person name="Moszer I."/>
            <person name="Albertini A.M."/>
            <person name="Alloni G."/>
            <person name="Azevedo V."/>
            <person name="Bertero M.G."/>
            <person name="Bessieres P."/>
            <person name="Bolotin A."/>
            <person name="Borchert S."/>
            <person name="Borriss R."/>
            <person name="Boursier L."/>
            <person name="Brans A."/>
            <person name="Braun M."/>
            <person name="Brignell S.C."/>
            <person name="Bron S."/>
            <person name="Brouillet S."/>
            <person name="Bruschi C.V."/>
            <person name="Caldwell B."/>
            <person name="Capuano V."/>
            <person name="Carter N.M."/>
            <person name="Choi S.-K."/>
            <person name="Codani J.-J."/>
            <person name="Connerton I.F."/>
            <person name="Cummings N.J."/>
            <person name="Daniel R.A."/>
            <person name="Denizot F."/>
            <person name="Devine K.M."/>
            <person name="Duesterhoeft A."/>
            <person name="Ehrlich S.D."/>
            <person name="Emmerson P.T."/>
            <person name="Entian K.-D."/>
            <person name="Errington J."/>
            <person name="Fabret C."/>
            <person name="Ferrari E."/>
            <person name="Foulger D."/>
            <person name="Fritz C."/>
            <person name="Fujita M."/>
            <person name="Fujita Y."/>
            <person name="Fuma S."/>
            <person name="Galizzi A."/>
            <person name="Galleron N."/>
            <person name="Ghim S.-Y."/>
            <person name="Glaser P."/>
            <person name="Goffeau A."/>
            <person name="Golightly E.J."/>
            <person name="Grandi G."/>
            <person name="Guiseppi G."/>
            <person name="Guy B.J."/>
            <person name="Haga K."/>
            <person name="Haiech J."/>
            <person name="Harwood C.R."/>
            <person name="Henaut A."/>
            <person name="Hilbert H."/>
            <person name="Holsappel S."/>
            <person name="Hosono S."/>
            <person name="Hullo M.-F."/>
            <person name="Itaya M."/>
            <person name="Jones L.-M."/>
            <person name="Joris B."/>
            <person name="Karamata D."/>
            <person name="Kasahara Y."/>
            <person name="Klaerr-Blanchard M."/>
            <person name="Klein C."/>
            <person name="Kobayashi Y."/>
            <person name="Koetter P."/>
            <person name="Koningstein G."/>
            <person name="Krogh S."/>
            <person name="Kumano M."/>
            <person name="Kurita K."/>
            <person name="Lapidus A."/>
            <person name="Lardinois S."/>
            <person name="Lauber J."/>
            <person name="Lazarevic V."/>
            <person name="Lee S.-M."/>
            <person name="Levine A."/>
            <person name="Liu H."/>
            <person name="Masuda S."/>
            <person name="Mauel C."/>
            <person name="Medigue C."/>
            <person name="Medina N."/>
            <person name="Mellado R.P."/>
            <person name="Mizuno M."/>
            <person name="Moestl D."/>
            <person name="Nakai S."/>
            <person name="Noback M."/>
            <person name="Noone D."/>
            <person name="O'Reilly M."/>
            <person name="Ogawa K."/>
            <person name="Ogiwara A."/>
            <person name="Oudega B."/>
            <person name="Park S.-H."/>
            <person name="Parro V."/>
            <person name="Pohl T.M."/>
            <person name="Portetelle D."/>
            <person name="Porwollik S."/>
            <person name="Prescott A.M."/>
            <person name="Presecan E."/>
            <person name="Pujic P."/>
            <person name="Purnelle B."/>
            <person name="Rapoport G."/>
            <person name="Rey M."/>
            <person name="Reynolds S."/>
            <person name="Rieger M."/>
            <person name="Rivolta C."/>
            <person name="Rocha E."/>
            <person name="Roche B."/>
            <person name="Rose M."/>
            <person name="Sadaie Y."/>
            <person name="Sato T."/>
            <person name="Scanlan E."/>
            <person name="Schleich S."/>
            <person name="Schroeter R."/>
            <person name="Scoffone F."/>
            <person name="Sekiguchi J."/>
            <person name="Sekowska A."/>
            <person name="Seror S.J."/>
            <person name="Serror P."/>
            <person name="Shin B.-S."/>
            <person name="Soldo B."/>
            <person name="Sorokin A."/>
            <person name="Tacconi E."/>
            <person name="Takagi T."/>
            <person name="Takahashi H."/>
            <person name="Takemaru K."/>
            <person name="Takeuchi M."/>
            <person name="Tamakoshi A."/>
            <person name="Tanaka T."/>
            <person name="Terpstra P."/>
            <person name="Tognoni A."/>
            <person name="Tosato V."/>
            <person name="Uchiyama S."/>
            <person name="Vandenbol M."/>
            <person name="Vannier F."/>
            <person name="Vassarotti A."/>
            <person name="Viari A."/>
            <person name="Wambutt R."/>
            <person name="Wedler E."/>
            <person name="Wedler H."/>
            <person name="Weitzenegger T."/>
            <person name="Winters P."/>
            <person name="Wipat A."/>
            <person name="Yamamoto H."/>
            <person name="Yamane K."/>
            <person name="Yasumoto K."/>
            <person name="Yata K."/>
            <person name="Yoshida K."/>
            <person name="Yoshikawa H.-F."/>
            <person name="Zumstein E."/>
            <person name="Yoshikawa H."/>
            <person name="Danchin A."/>
        </authorList>
    </citation>
    <scope>NUCLEOTIDE SEQUENCE [LARGE SCALE GENOMIC DNA]</scope>
    <source>
        <strain>168</strain>
    </source>
</reference>
<evidence type="ECO:0000256" key="1">
    <source>
        <dbReference type="SAM" id="MobiDB-lite"/>
    </source>
</evidence>
<protein>
    <recommendedName>
        <fullName>SPbeta prophage-derived uncharacterized protein YouA</fullName>
    </recommendedName>
</protein>
<sequence length="203" mass="21712">MAFLNQDGDKYTSAKDDGTGNPITAVSIERSTVPLEVGLNNDQPLNVNVANTALDVNITNTASVPVLVKNTAAIKTQVQKSYSEFVVTDADTVATGATKSYTVDLIDSLGVFRTYGVAMYTTQTDSSNSKVLASIYSVPKNIPFYSATTSGNDNSVLFNSIVFVQNYPLQKQLTFTAPKIHLTVKAAGTVDLTGLKIVVWGME</sequence>
<dbReference type="EMBL" id="AL009126">
    <property type="protein sequence ID" value="CAX52648.1"/>
    <property type="molecule type" value="Genomic_DNA"/>
</dbReference>
<dbReference type="RefSeq" id="WP_010886547.1">
    <property type="nucleotide sequence ID" value="NZ_OZ025638.1"/>
</dbReference>
<dbReference type="RefSeq" id="YP_003097751.1">
    <property type="nucleotide sequence ID" value="NC_000964.3"/>
</dbReference>
<dbReference type="FunCoup" id="C0H440">
    <property type="interactions" value="43"/>
</dbReference>
<dbReference type="STRING" id="224308.BSU21229"/>
<dbReference type="PaxDb" id="224308-BSU21229"/>
<dbReference type="EnsemblBacteria" id="CAX52648">
    <property type="protein sequence ID" value="CAX52648"/>
    <property type="gene ID" value="BSU_21229"/>
</dbReference>
<dbReference type="GeneID" id="8302922"/>
<dbReference type="KEGG" id="bsu:BSU21229"/>
<dbReference type="PATRIC" id="fig|224308.43.peg.2218"/>
<dbReference type="InParanoid" id="C0H440"/>
<dbReference type="OrthoDB" id="2918353at2"/>
<dbReference type="BioCyc" id="BSUB:BSU21229-MONOMER"/>
<dbReference type="Proteomes" id="UP000001570">
    <property type="component" value="Chromosome"/>
</dbReference>
<name>YOUA_BACSU</name>
<proteinExistence type="predicted"/>
<feature type="chain" id="PRO_0000382670" description="SPbeta prophage-derived uncharacterized protein YouA">
    <location>
        <begin position="1"/>
        <end position="203"/>
    </location>
</feature>
<feature type="region of interest" description="Disordered" evidence="1">
    <location>
        <begin position="1"/>
        <end position="23"/>
    </location>
</feature>
<feature type="compositionally biased region" description="Basic and acidic residues" evidence="1">
    <location>
        <begin position="7"/>
        <end position="18"/>
    </location>
</feature>